<sequence length="197" mass="21461">MSTNFIYPNAHLIAGVDEVGRGPLVGAVVTAAVILDPNNPIEGLADSKKLSEKKRLLLAEEIKAKALCWSLGRAEPEEIDRLNILHATMLAMQRAVAGLNIQPDFVLVDGNRIPTLPMPAQAVIKGDSLVAEISAASILAKVARDQEMAELDVQYPEYGFAKHKGYPTKLHFEKLEQFGATPFHRKSFAPVKKILGL</sequence>
<dbReference type="EC" id="3.1.26.4" evidence="1"/>
<dbReference type="EMBL" id="CP000687">
    <property type="protein sequence ID" value="ABY68734.1"/>
    <property type="molecule type" value="Genomic_DNA"/>
</dbReference>
<dbReference type="RefSeq" id="WP_005620061.1">
    <property type="nucleotide sequence ID" value="NC_010278.1"/>
</dbReference>
<dbReference type="SMR" id="B0BS34"/>
<dbReference type="KEGG" id="apj:APJL_0130"/>
<dbReference type="HOGENOM" id="CLU_036532_3_2_6"/>
<dbReference type="Proteomes" id="UP000008547">
    <property type="component" value="Chromosome"/>
</dbReference>
<dbReference type="GO" id="GO:0005737">
    <property type="term" value="C:cytoplasm"/>
    <property type="evidence" value="ECO:0007669"/>
    <property type="project" value="UniProtKB-SubCell"/>
</dbReference>
<dbReference type="GO" id="GO:0032299">
    <property type="term" value="C:ribonuclease H2 complex"/>
    <property type="evidence" value="ECO:0007669"/>
    <property type="project" value="TreeGrafter"/>
</dbReference>
<dbReference type="GO" id="GO:0030145">
    <property type="term" value="F:manganese ion binding"/>
    <property type="evidence" value="ECO:0007669"/>
    <property type="project" value="UniProtKB-UniRule"/>
</dbReference>
<dbReference type="GO" id="GO:0003723">
    <property type="term" value="F:RNA binding"/>
    <property type="evidence" value="ECO:0007669"/>
    <property type="project" value="InterPro"/>
</dbReference>
<dbReference type="GO" id="GO:0004523">
    <property type="term" value="F:RNA-DNA hybrid ribonuclease activity"/>
    <property type="evidence" value="ECO:0007669"/>
    <property type="project" value="UniProtKB-UniRule"/>
</dbReference>
<dbReference type="GO" id="GO:0043137">
    <property type="term" value="P:DNA replication, removal of RNA primer"/>
    <property type="evidence" value="ECO:0007669"/>
    <property type="project" value="TreeGrafter"/>
</dbReference>
<dbReference type="GO" id="GO:0006298">
    <property type="term" value="P:mismatch repair"/>
    <property type="evidence" value="ECO:0007669"/>
    <property type="project" value="TreeGrafter"/>
</dbReference>
<dbReference type="CDD" id="cd07182">
    <property type="entry name" value="RNase_HII_bacteria_HII_like"/>
    <property type="match status" value="1"/>
</dbReference>
<dbReference type="FunFam" id="3.30.420.10:FF:000006">
    <property type="entry name" value="Ribonuclease HII"/>
    <property type="match status" value="1"/>
</dbReference>
<dbReference type="Gene3D" id="3.30.420.10">
    <property type="entry name" value="Ribonuclease H-like superfamily/Ribonuclease H"/>
    <property type="match status" value="1"/>
</dbReference>
<dbReference type="HAMAP" id="MF_00052_B">
    <property type="entry name" value="RNase_HII_B"/>
    <property type="match status" value="1"/>
</dbReference>
<dbReference type="InterPro" id="IPR022898">
    <property type="entry name" value="RNase_HII"/>
</dbReference>
<dbReference type="InterPro" id="IPR001352">
    <property type="entry name" value="RNase_HII/HIII"/>
</dbReference>
<dbReference type="InterPro" id="IPR024567">
    <property type="entry name" value="RNase_HII/HIII_dom"/>
</dbReference>
<dbReference type="InterPro" id="IPR012337">
    <property type="entry name" value="RNaseH-like_sf"/>
</dbReference>
<dbReference type="InterPro" id="IPR036397">
    <property type="entry name" value="RNaseH_sf"/>
</dbReference>
<dbReference type="NCBIfam" id="NF000594">
    <property type="entry name" value="PRK00015.1-1"/>
    <property type="match status" value="1"/>
</dbReference>
<dbReference type="NCBIfam" id="NF000595">
    <property type="entry name" value="PRK00015.1-3"/>
    <property type="match status" value="1"/>
</dbReference>
<dbReference type="NCBIfam" id="NF000596">
    <property type="entry name" value="PRK00015.1-4"/>
    <property type="match status" value="1"/>
</dbReference>
<dbReference type="PANTHER" id="PTHR10954">
    <property type="entry name" value="RIBONUCLEASE H2 SUBUNIT A"/>
    <property type="match status" value="1"/>
</dbReference>
<dbReference type="PANTHER" id="PTHR10954:SF18">
    <property type="entry name" value="RIBONUCLEASE HII"/>
    <property type="match status" value="1"/>
</dbReference>
<dbReference type="Pfam" id="PF01351">
    <property type="entry name" value="RNase_HII"/>
    <property type="match status" value="1"/>
</dbReference>
<dbReference type="SUPFAM" id="SSF53098">
    <property type="entry name" value="Ribonuclease H-like"/>
    <property type="match status" value="1"/>
</dbReference>
<dbReference type="PROSITE" id="PS51975">
    <property type="entry name" value="RNASE_H_2"/>
    <property type="match status" value="1"/>
</dbReference>
<accession>B0BS34</accession>
<organism>
    <name type="scientific">Actinobacillus pleuropneumoniae serotype 3 (strain JL03)</name>
    <dbReference type="NCBI Taxonomy" id="434271"/>
    <lineage>
        <taxon>Bacteria</taxon>
        <taxon>Pseudomonadati</taxon>
        <taxon>Pseudomonadota</taxon>
        <taxon>Gammaproteobacteria</taxon>
        <taxon>Pasteurellales</taxon>
        <taxon>Pasteurellaceae</taxon>
        <taxon>Actinobacillus</taxon>
    </lineage>
</organism>
<reference key="1">
    <citation type="journal article" date="2008" name="PLoS ONE">
        <title>Genome biology of Actinobacillus pleuropneumoniae JL03, an isolate of serotype 3 prevalent in China.</title>
        <authorList>
            <person name="Xu Z."/>
            <person name="Zhou Y."/>
            <person name="Li L."/>
            <person name="Zhou R."/>
            <person name="Xiao S."/>
            <person name="Wan Y."/>
            <person name="Zhang S."/>
            <person name="Wang K."/>
            <person name="Li W."/>
            <person name="Li L."/>
            <person name="Jin H."/>
            <person name="Kang M."/>
            <person name="Dalai B."/>
            <person name="Li T."/>
            <person name="Liu L."/>
            <person name="Cheng Y."/>
            <person name="Zhang L."/>
            <person name="Xu T."/>
            <person name="Zheng H."/>
            <person name="Pu S."/>
            <person name="Wang B."/>
            <person name="Gu W."/>
            <person name="Zhang X.L."/>
            <person name="Zhu G.-F."/>
            <person name="Wang S."/>
            <person name="Zhao G.-P."/>
            <person name="Chen H."/>
        </authorList>
    </citation>
    <scope>NUCLEOTIDE SEQUENCE [LARGE SCALE GENOMIC DNA]</scope>
    <source>
        <strain>JL03</strain>
    </source>
</reference>
<comment type="function">
    <text evidence="1">Endonuclease that specifically degrades the RNA of RNA-DNA hybrids.</text>
</comment>
<comment type="catalytic activity">
    <reaction evidence="1">
        <text>Endonucleolytic cleavage to 5'-phosphomonoester.</text>
        <dbReference type="EC" id="3.1.26.4"/>
    </reaction>
</comment>
<comment type="cofactor">
    <cofactor evidence="1">
        <name>Mn(2+)</name>
        <dbReference type="ChEBI" id="CHEBI:29035"/>
    </cofactor>
    <cofactor evidence="1">
        <name>Mg(2+)</name>
        <dbReference type="ChEBI" id="CHEBI:18420"/>
    </cofactor>
    <text evidence="1">Manganese or magnesium. Binds 1 divalent metal ion per monomer in the absence of substrate. May bind a second metal ion after substrate binding.</text>
</comment>
<comment type="subcellular location">
    <subcellularLocation>
        <location evidence="1">Cytoplasm</location>
    </subcellularLocation>
</comment>
<comment type="similarity">
    <text evidence="1">Belongs to the RNase HII family.</text>
</comment>
<keyword id="KW-0963">Cytoplasm</keyword>
<keyword id="KW-0255">Endonuclease</keyword>
<keyword id="KW-0378">Hydrolase</keyword>
<keyword id="KW-0464">Manganese</keyword>
<keyword id="KW-0479">Metal-binding</keyword>
<keyword id="KW-0540">Nuclease</keyword>
<feature type="chain" id="PRO_1000091603" description="Ribonuclease HII">
    <location>
        <begin position="1"/>
        <end position="197"/>
    </location>
</feature>
<feature type="domain" description="RNase H type-2" evidence="2">
    <location>
        <begin position="11"/>
        <end position="197"/>
    </location>
</feature>
<feature type="binding site" evidence="1">
    <location>
        <position position="17"/>
    </location>
    <ligand>
        <name>a divalent metal cation</name>
        <dbReference type="ChEBI" id="CHEBI:60240"/>
    </ligand>
</feature>
<feature type="binding site" evidence="1">
    <location>
        <position position="18"/>
    </location>
    <ligand>
        <name>a divalent metal cation</name>
        <dbReference type="ChEBI" id="CHEBI:60240"/>
    </ligand>
</feature>
<feature type="binding site" evidence="1">
    <location>
        <position position="109"/>
    </location>
    <ligand>
        <name>a divalent metal cation</name>
        <dbReference type="ChEBI" id="CHEBI:60240"/>
    </ligand>
</feature>
<evidence type="ECO:0000255" key="1">
    <source>
        <dbReference type="HAMAP-Rule" id="MF_00052"/>
    </source>
</evidence>
<evidence type="ECO:0000255" key="2">
    <source>
        <dbReference type="PROSITE-ProRule" id="PRU01319"/>
    </source>
</evidence>
<name>RNH2_ACTPJ</name>
<proteinExistence type="inferred from homology"/>
<protein>
    <recommendedName>
        <fullName evidence="1">Ribonuclease HII</fullName>
        <shortName evidence="1">RNase HII</shortName>
        <ecNumber evidence="1">3.1.26.4</ecNumber>
    </recommendedName>
</protein>
<gene>
    <name evidence="1" type="primary">rnhB</name>
    <name type="ordered locus">APJL_0130</name>
</gene>